<gene>
    <name type="primary">jhd1</name>
    <name type="synonym">epe1</name>
    <name type="ORF">SPCC622.16c</name>
</gene>
<comment type="function">
    <text evidence="2 4">May be a histone demethylase that specifically demethylates 'Lys-36' of histone H3, thereby playing a central role in histone code (By similarity). Represses transcriptional silencing by negatively affecting heterochromatin stability.</text>
</comment>
<comment type="catalytic activity">
    <reaction evidence="2">
        <text>N(6),N(6)-dimethyl-L-lysyl(36)-[histone H3] + 2 2-oxoglutarate + 2 O2 = L-lysyl(36)-[histone H3] + 2 formaldehyde + 2 succinate + 2 CO2</text>
        <dbReference type="Rhea" id="RHEA:42032"/>
        <dbReference type="Rhea" id="RHEA-COMP:9785"/>
        <dbReference type="Rhea" id="RHEA-COMP:9787"/>
        <dbReference type="ChEBI" id="CHEBI:15379"/>
        <dbReference type="ChEBI" id="CHEBI:16526"/>
        <dbReference type="ChEBI" id="CHEBI:16810"/>
        <dbReference type="ChEBI" id="CHEBI:16842"/>
        <dbReference type="ChEBI" id="CHEBI:29969"/>
        <dbReference type="ChEBI" id="CHEBI:30031"/>
        <dbReference type="ChEBI" id="CHEBI:61976"/>
        <dbReference type="EC" id="1.14.11.27"/>
    </reaction>
</comment>
<comment type="cofactor">
    <cofactor evidence="1">
        <name>Fe(2+)</name>
        <dbReference type="ChEBI" id="CHEBI:29033"/>
    </cofactor>
    <text evidence="1">Binds 1 Fe(2+) ion per subunit.</text>
</comment>
<comment type="interaction">
    <interactant intactId="EBI-3505187">
        <id>O94603</id>
    </interactant>
    <interactant intactId="EBI-3505190">
        <id>Q10990</id>
        <label>cdt2</label>
    </interactant>
    <organismsDiffer>false</organismsDiffer>
    <experiments>2</experiments>
</comment>
<comment type="subcellular location">
    <subcellularLocation>
        <location evidence="4">Nucleus</location>
    </subcellularLocation>
</comment>
<comment type="domain">
    <text evidence="1">The JmjC domain mediates the demethylation activity.</text>
</comment>
<comment type="similarity">
    <text evidence="5">Belongs to the JHDM1 histone demethylase family.</text>
</comment>
<comment type="caution">
    <text evidence="6">In contrast to other JHDM1 histone demethylases, it lacks the iron catalytic His in position 370 which is replaced by a Tyr residue and has no histone demethylase activity in vitro (PubMed:16362057). It therefore may not be functional in vivo.</text>
</comment>
<keyword id="KW-0156">Chromatin regulator</keyword>
<keyword id="KW-0223">Dioxygenase</keyword>
<keyword id="KW-0408">Iron</keyword>
<keyword id="KW-0479">Metal-binding</keyword>
<keyword id="KW-0539">Nucleus</keyword>
<keyword id="KW-0560">Oxidoreductase</keyword>
<keyword id="KW-1185">Reference proteome</keyword>
<keyword id="KW-0804">Transcription</keyword>
<keyword id="KW-0805">Transcription regulation</keyword>
<protein>
    <recommendedName>
        <fullName>Putative JmjC domain-containing histone demethylation protein 1</fullName>
        <ecNumber evidence="2">1.14.11.27</ecNumber>
    </recommendedName>
    <alternativeName>
        <fullName>Heterochromatin-destabilizing protein epe1</fullName>
    </alternativeName>
    <alternativeName>
        <fullName>[Histone-H3]-lysine-36 demethylase 1</fullName>
    </alternativeName>
</protein>
<proteinExistence type="evidence at protein level"/>
<accession>O94603</accession>
<dbReference type="EC" id="1.14.11.27" evidence="2"/>
<dbReference type="EMBL" id="CU329672">
    <property type="protein sequence ID" value="CAA21872.1"/>
    <property type="molecule type" value="Genomic_DNA"/>
</dbReference>
<dbReference type="PIR" id="T41496">
    <property type="entry name" value="T41496"/>
</dbReference>
<dbReference type="RefSeq" id="NP_588188.1">
    <property type="nucleotide sequence ID" value="NM_001023178.2"/>
</dbReference>
<dbReference type="SMR" id="O94603"/>
<dbReference type="BioGRID" id="276044">
    <property type="interactions" value="334"/>
</dbReference>
<dbReference type="FunCoup" id="O94603">
    <property type="interactions" value="2"/>
</dbReference>
<dbReference type="IntAct" id="O94603">
    <property type="interactions" value="2"/>
</dbReference>
<dbReference type="STRING" id="284812.O94603"/>
<dbReference type="iPTMnet" id="O94603"/>
<dbReference type="PaxDb" id="4896-SPCC622.16c.1"/>
<dbReference type="EnsemblFungi" id="SPCC622.16c.1">
    <property type="protein sequence ID" value="SPCC622.16c.1:pep"/>
    <property type="gene ID" value="SPCC622.16c"/>
</dbReference>
<dbReference type="GeneID" id="2539481"/>
<dbReference type="KEGG" id="spo:2539481"/>
<dbReference type="PomBase" id="SPCC622.16c"/>
<dbReference type="VEuPathDB" id="FungiDB:SPCC622.16c"/>
<dbReference type="eggNOG" id="KOG1633">
    <property type="taxonomic scope" value="Eukaryota"/>
</dbReference>
<dbReference type="HOGENOM" id="CLU_013397_0_0_1"/>
<dbReference type="InParanoid" id="O94603"/>
<dbReference type="Reactome" id="R-SPO-2299718">
    <property type="pathway name" value="Condensation of Prophase Chromosomes"/>
</dbReference>
<dbReference type="Reactome" id="R-SPO-3214842">
    <property type="pathway name" value="HDMs demethylate histones"/>
</dbReference>
<dbReference type="Reactome" id="R-SPO-8951664">
    <property type="pathway name" value="Neddylation"/>
</dbReference>
<dbReference type="Reactome" id="R-SPO-983168">
    <property type="pathway name" value="Antigen processing: Ubiquitination &amp; Proteasome degradation"/>
</dbReference>
<dbReference type="PRO" id="PR:O94603"/>
<dbReference type="Proteomes" id="UP000002485">
    <property type="component" value="Chromosome III"/>
</dbReference>
<dbReference type="GO" id="GO:0000792">
    <property type="term" value="C:heterochromatin"/>
    <property type="evidence" value="ECO:0000314"/>
    <property type="project" value="PomBase"/>
</dbReference>
<dbReference type="GO" id="GO:1990342">
    <property type="term" value="C:heterochromatin island"/>
    <property type="evidence" value="ECO:0000314"/>
    <property type="project" value="PomBase"/>
</dbReference>
<dbReference type="GO" id="GO:0031934">
    <property type="term" value="C:mating-type region heterochromatin"/>
    <property type="evidence" value="ECO:0000314"/>
    <property type="project" value="PomBase"/>
</dbReference>
<dbReference type="GO" id="GO:0005634">
    <property type="term" value="C:nucleus"/>
    <property type="evidence" value="ECO:0000314"/>
    <property type="project" value="PomBase"/>
</dbReference>
<dbReference type="GO" id="GO:0005721">
    <property type="term" value="C:pericentric heterochromatin"/>
    <property type="evidence" value="ECO:0000314"/>
    <property type="project" value="PomBase"/>
</dbReference>
<dbReference type="GO" id="GO:0140720">
    <property type="term" value="C:subtelomeric heterochromatin"/>
    <property type="evidence" value="ECO:0000314"/>
    <property type="project" value="PomBase"/>
</dbReference>
<dbReference type="GO" id="GO:0032452">
    <property type="term" value="F:histone demethylase activity"/>
    <property type="evidence" value="ECO:0000318"/>
    <property type="project" value="GO_Central"/>
</dbReference>
<dbReference type="GO" id="GO:0140680">
    <property type="term" value="F:histone H3K36me/H3K36me2 demethylase activity"/>
    <property type="evidence" value="ECO:0007669"/>
    <property type="project" value="UniProtKB-EC"/>
</dbReference>
<dbReference type="GO" id="GO:0032454">
    <property type="term" value="F:histone H3K9 demethylase activity"/>
    <property type="evidence" value="ECO:0000314"/>
    <property type="project" value="PomBase"/>
</dbReference>
<dbReference type="GO" id="GO:0046872">
    <property type="term" value="F:metal ion binding"/>
    <property type="evidence" value="ECO:0007669"/>
    <property type="project" value="UniProtKB-KW"/>
</dbReference>
<dbReference type="GO" id="GO:0003712">
    <property type="term" value="F:transcription coregulator activity"/>
    <property type="evidence" value="ECO:0000318"/>
    <property type="project" value="GO_Central"/>
</dbReference>
<dbReference type="GO" id="GO:0006338">
    <property type="term" value="P:chromatin remodeling"/>
    <property type="evidence" value="ECO:0000318"/>
    <property type="project" value="GO_Central"/>
</dbReference>
<dbReference type="GO" id="GO:0033696">
    <property type="term" value="P:heterochromatin boundary formation"/>
    <property type="evidence" value="ECO:0000314"/>
    <property type="project" value="PomBase"/>
</dbReference>
<dbReference type="GO" id="GO:0010964">
    <property type="term" value="P:regulation of regulatory ncRNA-mediated heterochromatin formation"/>
    <property type="evidence" value="ECO:0000315"/>
    <property type="project" value="PomBase"/>
</dbReference>
<dbReference type="GO" id="GO:1902801">
    <property type="term" value="P:regulation of siRNA-independent facultative heterochromatin formation"/>
    <property type="evidence" value="ECO:0000315"/>
    <property type="project" value="PomBase"/>
</dbReference>
<dbReference type="GO" id="GO:0006357">
    <property type="term" value="P:regulation of transcription by RNA polymerase II"/>
    <property type="evidence" value="ECO:0000318"/>
    <property type="project" value="GO_Central"/>
</dbReference>
<dbReference type="Gene3D" id="2.60.120.650">
    <property type="entry name" value="Cupin"/>
    <property type="match status" value="1"/>
</dbReference>
<dbReference type="InterPro" id="IPR041070">
    <property type="entry name" value="JHD"/>
</dbReference>
<dbReference type="InterPro" id="IPR050690">
    <property type="entry name" value="JHDM1_Histone_Demethylase"/>
</dbReference>
<dbReference type="InterPro" id="IPR003347">
    <property type="entry name" value="JmjC_dom"/>
</dbReference>
<dbReference type="PANTHER" id="PTHR23123">
    <property type="entry name" value="PHD/F-BOX CONTAINING PROTEIN"/>
    <property type="match status" value="1"/>
</dbReference>
<dbReference type="Pfam" id="PF17811">
    <property type="entry name" value="JHD"/>
    <property type="match status" value="1"/>
</dbReference>
<dbReference type="Pfam" id="PF02373">
    <property type="entry name" value="JmjC"/>
    <property type="match status" value="1"/>
</dbReference>
<dbReference type="SMART" id="SM00558">
    <property type="entry name" value="JmjC"/>
    <property type="match status" value="1"/>
</dbReference>
<dbReference type="SUPFAM" id="SSF51197">
    <property type="entry name" value="Clavaminate synthase-like"/>
    <property type="match status" value="1"/>
</dbReference>
<dbReference type="PROSITE" id="PS51184">
    <property type="entry name" value="JMJC"/>
    <property type="match status" value="1"/>
</dbReference>
<sequence length="948" mass="108653">MDSWLEYDDIINQDIDIPSNDLSGSGTLCVGVHSSLLENSLNSIDSFISSKEEISWCGNQSTPIATKSHLSCINPQYVNPFDTSPVSVDTEFQDTYLLDAPSFAQPHFSERQSVDKTRSRCLSRNRRRKRHPNLHKNHQRLLGMSFPQDGFRRMPAESVNFSYFRDTGFNEPTIFPSSDTQNTRQLNLSKIATLIGYDCPLALVDVVTQKQIPNKMDMESWVKYMSLEPSKRGRIYDVLSLEVSTTKLAYYVRKPNIVRDLDLVNTVWPPGSFALGEYPHVDTYCLMSAENSYTEFHIEFGGSSAYYNILDGCKIFYLIPGTSKNWEAYTAWLTSSNDSDKKFLPNMVDVCYCVEVHSQQTILVPSGWIYAVVTPCDTISIAGNFLTFLHIYPQLSIYNLELQLGIEKEYQYPYFESIMWYTAIHFYLAFPDNSSRDGIDDIIAEYETGRLFDINAFTEQELDGFEELLNYLYIRAQILRDCDIIIDIYNEPVKISKNNGYNSAYTMVPPDLDEICVDFVQKFGAWITYHHRRSAKHPSCNCFSHLQTKLIDSGPKPANNSYQHQSNFIGVVISTNHNIIKKCQESQIQTGKNNCSFQLVKKRIKSTKKAPSWRSIIKAFKKRENTRCNFLSSLHATTFREDIVVRPKIKSFVLEQLIFQALFSFAINWTPSFFLNHSNFENIALSKETFNFGGEANCENTDTTLFTTWGDQGFRPSDSICYNDFNLLETANSDAEASIHELELQPLNAVNEREVDISQTDMTPSTALDTRVDTRVDSLPEFSNLILSPSSNDDSFQLDDLLSPSSSNLKQQIQKVVPQNSLEFSVGEKEKKAAEYSLLHTFSYKRLSMENEKPDTTKVPLKYNIQHEEMKAYRRKNDLEYIDQHFASSKSGISNGRNNNKEVNLTKAENVGIKKRRIMKNENNIYDFEDHSPVREKWGHRLRSRGAS</sequence>
<name>JHD1_SCHPO</name>
<organism>
    <name type="scientific">Schizosaccharomyces pombe (strain 972 / ATCC 24843)</name>
    <name type="common">Fission yeast</name>
    <dbReference type="NCBI Taxonomy" id="284812"/>
    <lineage>
        <taxon>Eukaryota</taxon>
        <taxon>Fungi</taxon>
        <taxon>Dikarya</taxon>
        <taxon>Ascomycota</taxon>
        <taxon>Taphrinomycotina</taxon>
        <taxon>Schizosaccharomycetes</taxon>
        <taxon>Schizosaccharomycetales</taxon>
        <taxon>Schizosaccharomycetaceae</taxon>
        <taxon>Schizosaccharomyces</taxon>
    </lineage>
</organism>
<feature type="chain" id="PRO_0000086985" description="Putative JmjC domain-containing histone demethylation protein 1">
    <location>
        <begin position="1"/>
        <end position="948"/>
    </location>
</feature>
<feature type="domain" description="JmjC" evidence="3">
    <location>
        <begin position="243"/>
        <end position="402"/>
    </location>
</feature>
<feature type="binding site" evidence="1">
    <location>
        <position position="294"/>
    </location>
    <ligand>
        <name>substrate</name>
    </ligand>
</feature>
<feature type="binding site" evidence="3">
    <location>
        <position position="297"/>
    </location>
    <ligand>
        <name>Fe cation</name>
        <dbReference type="ChEBI" id="CHEBI:24875"/>
        <note>catalytic</note>
    </ligand>
</feature>
<feature type="binding site" evidence="3">
    <location>
        <position position="299"/>
    </location>
    <ligand>
        <name>Fe cation</name>
        <dbReference type="ChEBI" id="CHEBI:24875"/>
        <note>catalytic</note>
    </ligand>
</feature>
<feature type="binding site" evidence="1">
    <location>
        <position position="314"/>
    </location>
    <ligand>
        <name>substrate</name>
    </ligand>
</feature>
<feature type="mutagenesis site" description="Loss of function." evidence="4">
    <original>Y</original>
    <variation>A</variation>
    <location>
        <position position="307"/>
    </location>
</feature>
<evidence type="ECO:0000250" key="1"/>
<evidence type="ECO:0000250" key="2">
    <source>
        <dbReference type="UniProtKB" id="P40034"/>
    </source>
</evidence>
<evidence type="ECO:0000255" key="3">
    <source>
        <dbReference type="PROSITE-ProRule" id="PRU00538"/>
    </source>
</evidence>
<evidence type="ECO:0000269" key="4">
    <source>
    </source>
</evidence>
<evidence type="ECO:0000305" key="5"/>
<evidence type="ECO:0000305" key="6">
    <source>
    </source>
</evidence>
<reference key="1">
    <citation type="journal article" date="2002" name="Nature">
        <title>The genome sequence of Schizosaccharomyces pombe.</title>
        <authorList>
            <person name="Wood V."/>
            <person name="Gwilliam R."/>
            <person name="Rajandream M.A."/>
            <person name="Lyne M.H."/>
            <person name="Lyne R."/>
            <person name="Stewart A."/>
            <person name="Sgouros J.G."/>
            <person name="Peat N."/>
            <person name="Hayles J."/>
            <person name="Baker S.G."/>
            <person name="Basham D."/>
            <person name="Bowman S."/>
            <person name="Brooks K."/>
            <person name="Brown D."/>
            <person name="Brown S."/>
            <person name="Chillingworth T."/>
            <person name="Churcher C.M."/>
            <person name="Collins M."/>
            <person name="Connor R."/>
            <person name="Cronin A."/>
            <person name="Davis P."/>
            <person name="Feltwell T."/>
            <person name="Fraser A."/>
            <person name="Gentles S."/>
            <person name="Goble A."/>
            <person name="Hamlin N."/>
            <person name="Harris D.E."/>
            <person name="Hidalgo J."/>
            <person name="Hodgson G."/>
            <person name="Holroyd S."/>
            <person name="Hornsby T."/>
            <person name="Howarth S."/>
            <person name="Huckle E.J."/>
            <person name="Hunt S."/>
            <person name="Jagels K."/>
            <person name="James K.D."/>
            <person name="Jones L."/>
            <person name="Jones M."/>
            <person name="Leather S."/>
            <person name="McDonald S."/>
            <person name="McLean J."/>
            <person name="Mooney P."/>
            <person name="Moule S."/>
            <person name="Mungall K.L."/>
            <person name="Murphy L.D."/>
            <person name="Niblett D."/>
            <person name="Odell C."/>
            <person name="Oliver K."/>
            <person name="O'Neil S."/>
            <person name="Pearson D."/>
            <person name="Quail M.A."/>
            <person name="Rabbinowitsch E."/>
            <person name="Rutherford K.M."/>
            <person name="Rutter S."/>
            <person name="Saunders D."/>
            <person name="Seeger K."/>
            <person name="Sharp S."/>
            <person name="Skelton J."/>
            <person name="Simmonds M.N."/>
            <person name="Squares R."/>
            <person name="Squares S."/>
            <person name="Stevens K."/>
            <person name="Taylor K."/>
            <person name="Taylor R.G."/>
            <person name="Tivey A."/>
            <person name="Walsh S.V."/>
            <person name="Warren T."/>
            <person name="Whitehead S."/>
            <person name="Woodward J.R."/>
            <person name="Volckaert G."/>
            <person name="Aert R."/>
            <person name="Robben J."/>
            <person name="Grymonprez B."/>
            <person name="Weltjens I."/>
            <person name="Vanstreels E."/>
            <person name="Rieger M."/>
            <person name="Schaefer M."/>
            <person name="Mueller-Auer S."/>
            <person name="Gabel C."/>
            <person name="Fuchs M."/>
            <person name="Duesterhoeft A."/>
            <person name="Fritzc C."/>
            <person name="Holzer E."/>
            <person name="Moestl D."/>
            <person name="Hilbert H."/>
            <person name="Borzym K."/>
            <person name="Langer I."/>
            <person name="Beck A."/>
            <person name="Lehrach H."/>
            <person name="Reinhardt R."/>
            <person name="Pohl T.M."/>
            <person name="Eger P."/>
            <person name="Zimmermann W."/>
            <person name="Wedler H."/>
            <person name="Wambutt R."/>
            <person name="Purnelle B."/>
            <person name="Goffeau A."/>
            <person name="Cadieu E."/>
            <person name="Dreano S."/>
            <person name="Gloux S."/>
            <person name="Lelaure V."/>
            <person name="Mottier S."/>
            <person name="Galibert F."/>
            <person name="Aves S.J."/>
            <person name="Xiang Z."/>
            <person name="Hunt C."/>
            <person name="Moore K."/>
            <person name="Hurst S.M."/>
            <person name="Lucas M."/>
            <person name="Rochet M."/>
            <person name="Gaillardin C."/>
            <person name="Tallada V.A."/>
            <person name="Garzon A."/>
            <person name="Thode G."/>
            <person name="Daga R.R."/>
            <person name="Cruzado L."/>
            <person name="Jimenez J."/>
            <person name="Sanchez M."/>
            <person name="del Rey F."/>
            <person name="Benito J."/>
            <person name="Dominguez A."/>
            <person name="Revuelta J.L."/>
            <person name="Moreno S."/>
            <person name="Armstrong J."/>
            <person name="Forsburg S.L."/>
            <person name="Cerutti L."/>
            <person name="Lowe T."/>
            <person name="McCombie W.R."/>
            <person name="Paulsen I."/>
            <person name="Potashkin J."/>
            <person name="Shpakovski G.V."/>
            <person name="Ussery D."/>
            <person name="Barrell B.G."/>
            <person name="Nurse P."/>
        </authorList>
    </citation>
    <scope>NUCLEOTIDE SEQUENCE [LARGE SCALE GENOMIC DNA]</scope>
    <source>
        <strain>972 / ATCC 24843</strain>
    </source>
</reference>
<reference key="2">
    <citation type="journal article" date="2003" name="Mol. Cell. Biol.">
        <title>A novel jmjC domain protein modulates heterochromatization in fission yeast.</title>
        <authorList>
            <person name="Ayoub N."/>
            <person name="Noma K."/>
            <person name="Isaac S."/>
            <person name="Kahan T."/>
            <person name="Grewal S.I.S."/>
            <person name="Cohen A."/>
        </authorList>
    </citation>
    <scope>FUNCTION</scope>
    <scope>SUBCELLULAR LOCATION</scope>
    <scope>MUTAGENESIS OF TYR-307</scope>
</reference>
<reference key="3">
    <citation type="journal article" date="2005" name="EMBO Rep.">
        <title>Methylation: lost in hydroxylation?</title>
        <authorList>
            <person name="Trewick S.C."/>
            <person name="McLaughlin P.J."/>
            <person name="Allshire R.C."/>
        </authorList>
    </citation>
    <scope>POSSIBLE FUNCTION AS A DEMETHYLASE</scope>
</reference>
<reference key="4">
    <citation type="journal article" date="2006" name="Nature">
        <title>Histone demethylation by a family of JmjC domain-containing proteins.</title>
        <authorList>
            <person name="Tsukada Y."/>
            <person name="Fang J."/>
            <person name="Erdjument-Bromage H."/>
            <person name="Warren M.E."/>
            <person name="Borchers C.H."/>
            <person name="Tempst P."/>
            <person name="Zhang Y."/>
        </authorList>
    </citation>
    <scope>LACK OF DEMETHYLASE ACTIVITY IN VITRO</scope>
</reference>